<evidence type="ECO:0000255" key="1">
    <source>
        <dbReference type="HAMAP-Rule" id="MF_04010"/>
    </source>
</evidence>
<evidence type="ECO:0000256" key="2">
    <source>
        <dbReference type="SAM" id="MobiDB-lite"/>
    </source>
</evidence>
<evidence type="ECO:0000305" key="3"/>
<gene>
    <name type="ORF">BBLF2/BBLF3</name>
</gene>
<organism>
    <name type="scientific">Epstein-Barr virus (strain B95-8)</name>
    <name type="common">HHV-4</name>
    <name type="synonym">Human herpesvirus 4</name>
    <dbReference type="NCBI Taxonomy" id="10377"/>
    <lineage>
        <taxon>Viruses</taxon>
        <taxon>Duplodnaviria</taxon>
        <taxon>Heunggongvirae</taxon>
        <taxon>Peploviricota</taxon>
        <taxon>Herviviricetes</taxon>
        <taxon>Herpesvirales</taxon>
        <taxon>Orthoherpesviridae</taxon>
        <taxon>Gammaherpesvirinae</taxon>
        <taxon>Lymphocryptovirus</taxon>
        <taxon>Lymphocryptovirus humangamma4</taxon>
        <taxon>Epstein-Barr virus (strain GD1)</taxon>
    </lineage>
</organism>
<sequence>MMETPAESVRARVSSVTFYNVTQTAGRWWAIWVVGIVPIKREDVETLIVVQACQPPLGGSLEPPVVNAPSTTELNFLRWERELRRSGGLIAMLADAAEKDLFDLSFRTRDRRLLSAARVEDEQGLIFQPLFPAQVVCQSCSGDDGRDQQPPPVDGFGSEMEGEQTCPHAQRHSESPGQLDVYIRTPRGDVFTYSTETPDDPSPVPFRDILRPVTYEVDLVSSDGATGRGGDARRHRVSLKILEPAGGFESWLVNSWSMAGGGLYAFLRSIYASCYANHRGTKPIFYLLDPELCPGGSDFQPYVPGFPFLPIHYVGRARPAFWHRAPHSEGLLLLDLNLGVSGTPLADALLGLDARSGQRRGSLLLQQIWPPTRKEINPRHVCTREGGEGGGEDETTVVGRAEATAILEADATWWLYELARCHLSARGAPVGTPDGGGQARDAQTWLRALHRYGTSDTRRALGGLYTAVTRVLLHAAADLGLTWAYADEFILGFVAPTSAHPSEEPLAQAFLQGVKDSEDASRLDRDVMGGEATVARRHIRVKARRGPGCLLMAIFQGDLYVGGCREHSGPFLVWHEAFSWTLDQLAARPEADKAPPSHDHLLTLVRDLTRRLAPGRRRNRFWALPRAWLQRLRRAGLRLSGSHVCLLDKDGARPAPCQTATEHGLSPTAYFREIMAFLLDVISALHPGYTIPMEITRETDLLMTVLSLF</sequence>
<protein>
    <recommendedName>
        <fullName evidence="1">DNA helicase/primase complex-associated protein</fullName>
        <shortName evidence="1">HEPA</shortName>
    </recommendedName>
    <alternativeName>
        <fullName evidence="1">Primase-associated factor</fullName>
    </alternativeName>
</protein>
<accession>P30118</accession>
<accession>Q8AZJ7</accession>
<reference key="1">
    <citation type="journal article" date="1984" name="Nature">
        <title>DNA sequence and expression of the B95-8 Epstein-Barr virus genome.</title>
        <authorList>
            <person name="Baer R."/>
            <person name="Bankier A.T."/>
            <person name="Biggin M.D."/>
            <person name="Deininger P.L."/>
            <person name="Farrell P.J."/>
            <person name="Gibson T.J."/>
            <person name="Hatfull G."/>
            <person name="Hudson G.S."/>
            <person name="Satchwell S.C."/>
            <person name="Seguin C."/>
            <person name="Tuffnell P.S."/>
            <person name="Barrell B.G."/>
        </authorList>
    </citation>
    <scope>NUCLEOTIDE SEQUENCE [LARGE SCALE GENOMIC DNA]</scope>
</reference>
<reference key="2">
    <citation type="journal article" date="2003" name="Virology">
        <title>Updated Epstein-Barr virus (EBV) DNA sequence and analysis of a promoter for the BART (CST, BARF0) RNAs of EBV.</title>
        <authorList>
            <person name="de Jesus O."/>
            <person name="Smith P.R."/>
            <person name="Spender L.C."/>
            <person name="Elgueta Karstegl C."/>
            <person name="Niller H.H."/>
            <person name="Huang D."/>
            <person name="Farrell P.J."/>
        </authorList>
    </citation>
    <scope>GENOME REANNOTATION</scope>
</reference>
<proteinExistence type="inferred from homology"/>
<organismHost>
    <name type="scientific">Homo sapiens</name>
    <name type="common">Human</name>
    <dbReference type="NCBI Taxonomy" id="9606"/>
</organismHost>
<dbReference type="EMBL" id="V01555">
    <property type="protein sequence ID" value="CAA24824.1"/>
    <property type="status" value="ALT_SEQ"/>
    <property type="molecule type" value="Genomic_DNA"/>
</dbReference>
<dbReference type="EMBL" id="AJ507799">
    <property type="protein sequence ID" value="CAD53434.1"/>
    <property type="status" value="ALT_INIT"/>
    <property type="molecule type" value="Genomic_DNA"/>
</dbReference>
<dbReference type="PIR" id="S33029">
    <property type="entry name" value="S33029"/>
</dbReference>
<dbReference type="RefSeq" id="YP_401684.2">
    <property type="nucleotide sequence ID" value="NC_007605.1"/>
</dbReference>
<dbReference type="GeneID" id="3783684"/>
<dbReference type="KEGG" id="vg:3783684"/>
<dbReference type="Proteomes" id="UP000153037">
    <property type="component" value="Segment"/>
</dbReference>
<dbReference type="GO" id="GO:0042025">
    <property type="term" value="C:host cell nucleus"/>
    <property type="evidence" value="ECO:0007669"/>
    <property type="project" value="UniProtKB-SubCell"/>
</dbReference>
<dbReference type="GO" id="GO:0019079">
    <property type="term" value="P:viral genome replication"/>
    <property type="evidence" value="ECO:0007669"/>
    <property type="project" value="InterPro"/>
</dbReference>
<dbReference type="HAMAP" id="MF_04010">
    <property type="entry name" value="HSV_HEPA"/>
    <property type="match status" value="1"/>
</dbReference>
<dbReference type="InterPro" id="IPR004996">
    <property type="entry name" value="HSV_HEPA"/>
</dbReference>
<dbReference type="Pfam" id="PF03324">
    <property type="entry name" value="Herpes_HEPA"/>
    <property type="match status" value="1"/>
</dbReference>
<name>HEPA_EBVB9</name>
<feature type="chain" id="PRO_0000116265" description="DNA helicase/primase complex-associated protein">
    <location>
        <begin position="1"/>
        <end position="709"/>
    </location>
</feature>
<feature type="region of interest" description="Disordered" evidence="2">
    <location>
        <begin position="141"/>
        <end position="176"/>
    </location>
</feature>
<comment type="function">
    <text evidence="1">Component of the helicase/primase complex. Unwinds the DNA at the replication forks and generates single-stranded DNA for both leading and lagging strand synthesis. The primase synthesizes short RNA primers on the lagging strand that the polymerase presumably elongates using dNTPs. The primase-associated factor has no known catalytic activity in the complex and may serve to facilitate the formation of the replisome by directly interacting with the origin-binding protein and the polymerase.</text>
</comment>
<comment type="subunit">
    <text evidence="1">Associates with the primase and the helicase to form the helicase-primase complex. Interacts with the origin-binding protein. Interacts with the polymerase catalytic subunit.</text>
</comment>
<comment type="subcellular location">
    <subcellularLocation>
        <location evidence="1">Host nucleus</location>
    </subcellularLocation>
</comment>
<comment type="similarity">
    <text evidence="1">Belongs to the herpesviridae HEPA family.</text>
</comment>
<comment type="sequence caution" evidence="3">
    <conflict type="erroneous initiation">
        <sequence resource="EMBL-CDS" id="CAD53434"/>
    </conflict>
    <text>Truncated N-terminus.</text>
</comment>
<keyword id="KW-0244">Early protein</keyword>
<keyword id="KW-1048">Host nucleus</keyword>
<keyword id="KW-1185">Reference proteome</keyword>